<evidence type="ECO:0000250" key="1">
    <source>
        <dbReference type="UniProtKB" id="P49171"/>
    </source>
</evidence>
<evidence type="ECO:0000250" key="2">
    <source>
        <dbReference type="UniProtKB" id="P62854"/>
    </source>
</evidence>
<evidence type="ECO:0000255" key="3">
    <source>
        <dbReference type="RuleBase" id="RU363128"/>
    </source>
</evidence>
<evidence type="ECO:0000256" key="4">
    <source>
        <dbReference type="SAM" id="MobiDB-lite"/>
    </source>
</evidence>
<evidence type="ECO:0000269" key="5">
    <source>
    </source>
</evidence>
<evidence type="ECO:0000269" key="6">
    <source>
    </source>
</evidence>
<evidence type="ECO:0000269" key="7">
    <source>
    </source>
</evidence>
<evidence type="ECO:0000269" key="8">
    <source>
    </source>
</evidence>
<evidence type="ECO:0000269" key="9">
    <source>
    </source>
</evidence>
<evidence type="ECO:0000269" key="10">
    <source>
    </source>
</evidence>
<evidence type="ECO:0000269" key="11">
    <source>
    </source>
</evidence>
<evidence type="ECO:0000269" key="12">
    <source>
    </source>
</evidence>
<evidence type="ECO:0000305" key="13"/>
<evidence type="ECO:0007744" key="14">
    <source>
        <dbReference type="PDB" id="4D5L"/>
    </source>
</evidence>
<evidence type="ECO:0007744" key="15">
    <source>
        <dbReference type="PDB" id="4D61"/>
    </source>
</evidence>
<evidence type="ECO:0007744" key="16">
    <source>
        <dbReference type="PDB" id="4KZX"/>
    </source>
</evidence>
<evidence type="ECO:0007744" key="17">
    <source>
        <dbReference type="PDB" id="4KZY"/>
    </source>
</evidence>
<evidence type="ECO:0007744" key="18">
    <source>
        <dbReference type="PDB" id="6D90"/>
    </source>
</evidence>
<evidence type="ECO:0007744" key="19">
    <source>
        <dbReference type="PDB" id="6P5I"/>
    </source>
</evidence>
<evidence type="ECO:0007744" key="20">
    <source>
        <dbReference type="PDB" id="6P5J"/>
    </source>
</evidence>
<evidence type="ECO:0007744" key="21">
    <source>
        <dbReference type="PDB" id="6W2S"/>
    </source>
</evidence>
<evidence type="ECO:0007744" key="22">
    <source>
        <dbReference type="PDB" id="6W2T"/>
    </source>
</evidence>
<evidence type="ECO:0007744" key="23">
    <source>
        <dbReference type="PDB" id="7SYO"/>
    </source>
</evidence>
<evidence type="ECO:0007744" key="24">
    <source>
        <dbReference type="PDB" id="7SYP"/>
    </source>
</evidence>
<evidence type="ECO:0007744" key="25">
    <source>
        <dbReference type="PDB" id="7UCJ"/>
    </source>
</evidence>
<evidence type="ECO:0007744" key="26">
    <source>
        <dbReference type="PDB" id="7UCK"/>
    </source>
</evidence>
<evidence type="ECO:0007829" key="27">
    <source>
        <dbReference type="PDB" id="6YAL"/>
    </source>
</evidence>
<evidence type="ECO:0007829" key="28">
    <source>
        <dbReference type="PDB" id="6YAN"/>
    </source>
</evidence>
<evidence type="ECO:0007829" key="29">
    <source>
        <dbReference type="PDB" id="7JQB"/>
    </source>
</evidence>
<evidence type="ECO:0007829" key="30">
    <source>
        <dbReference type="PDB" id="8P03"/>
    </source>
</evidence>
<dbReference type="EMBL" id="AAGW02026493">
    <property type="status" value="NOT_ANNOTATED_CDS"/>
    <property type="molecule type" value="Genomic_DNA"/>
</dbReference>
<dbReference type="RefSeq" id="XP_002717359.1">
    <property type="nucleotide sequence ID" value="XM_002717313.3"/>
</dbReference>
<dbReference type="PDB" id="4D5L">
    <property type="method" value="EM"/>
    <property type="resolution" value="9.00 A"/>
    <property type="chains" value="a=1-115"/>
</dbReference>
<dbReference type="PDB" id="4D61">
    <property type="method" value="EM"/>
    <property type="resolution" value="9.00 A"/>
    <property type="chains" value="a=1-115"/>
</dbReference>
<dbReference type="PDB" id="4KZX">
    <property type="method" value="X-ray"/>
    <property type="resolution" value="7.81 A"/>
    <property type="chains" value="a=1-115"/>
</dbReference>
<dbReference type="PDB" id="4KZY">
    <property type="method" value="X-ray"/>
    <property type="resolution" value="7.01 A"/>
    <property type="chains" value="a=1-115"/>
</dbReference>
<dbReference type="PDB" id="4KZZ">
    <property type="method" value="X-ray"/>
    <property type="resolution" value="7.03 A"/>
    <property type="chains" value="a=1-115"/>
</dbReference>
<dbReference type="PDB" id="5K0Y">
    <property type="method" value="EM"/>
    <property type="resolution" value="5.80 A"/>
    <property type="chains" value="k=2-100"/>
</dbReference>
<dbReference type="PDB" id="6D90">
    <property type="method" value="EM"/>
    <property type="resolution" value="3.20 A"/>
    <property type="chains" value="bb=1-115"/>
</dbReference>
<dbReference type="PDB" id="6P4G">
    <property type="method" value="EM"/>
    <property type="resolution" value="3.10 A"/>
    <property type="chains" value="b=1-115"/>
</dbReference>
<dbReference type="PDB" id="6P4H">
    <property type="method" value="EM"/>
    <property type="resolution" value="3.20 A"/>
    <property type="chains" value="b=1-115"/>
</dbReference>
<dbReference type="PDB" id="6P5I">
    <property type="method" value="EM"/>
    <property type="resolution" value="3.10 A"/>
    <property type="chains" value="b=1-115"/>
</dbReference>
<dbReference type="PDB" id="6P5J">
    <property type="method" value="EM"/>
    <property type="resolution" value="3.10 A"/>
    <property type="chains" value="b=1-115"/>
</dbReference>
<dbReference type="PDB" id="6P5K">
    <property type="method" value="EM"/>
    <property type="resolution" value="3.10 A"/>
    <property type="chains" value="b=1-115"/>
</dbReference>
<dbReference type="PDB" id="6P5N">
    <property type="method" value="EM"/>
    <property type="resolution" value="3.20 A"/>
    <property type="chains" value="b=1-115"/>
</dbReference>
<dbReference type="PDB" id="6W2S">
    <property type="method" value="EM"/>
    <property type="resolution" value="3.00 A"/>
    <property type="chains" value="b=1-115"/>
</dbReference>
<dbReference type="PDB" id="6W2T">
    <property type="method" value="EM"/>
    <property type="resolution" value="3.36 A"/>
    <property type="chains" value="b=1-115"/>
</dbReference>
<dbReference type="PDB" id="6YAL">
    <property type="method" value="EM"/>
    <property type="resolution" value="3.00 A"/>
    <property type="chains" value="b=1-115"/>
</dbReference>
<dbReference type="PDB" id="6YAM">
    <property type="method" value="EM"/>
    <property type="resolution" value="3.60 A"/>
    <property type="chains" value="b=1-115"/>
</dbReference>
<dbReference type="PDB" id="6YAN">
    <property type="method" value="EM"/>
    <property type="resolution" value="3.48 A"/>
    <property type="chains" value="b=2-100"/>
</dbReference>
<dbReference type="PDB" id="7JQB">
    <property type="method" value="EM"/>
    <property type="resolution" value="2.70 A"/>
    <property type="chains" value="b=1-115"/>
</dbReference>
<dbReference type="PDB" id="7JQC">
    <property type="method" value="EM"/>
    <property type="resolution" value="3.30 A"/>
    <property type="chains" value="b=1-115"/>
</dbReference>
<dbReference type="PDB" id="7MDZ">
    <property type="method" value="EM"/>
    <property type="resolution" value="3.20 A"/>
    <property type="chains" value="aa=1-115"/>
</dbReference>
<dbReference type="PDB" id="7SYG">
    <property type="method" value="EM"/>
    <property type="resolution" value="4.30 A"/>
    <property type="chains" value="b=2-102"/>
</dbReference>
<dbReference type="PDB" id="7SYH">
    <property type="method" value="EM"/>
    <property type="resolution" value="4.60 A"/>
    <property type="chains" value="b=2-102"/>
</dbReference>
<dbReference type="PDB" id="7SYI">
    <property type="method" value="EM"/>
    <property type="resolution" value="4.50 A"/>
    <property type="chains" value="b=2-102"/>
</dbReference>
<dbReference type="PDB" id="7SYJ">
    <property type="method" value="EM"/>
    <property type="resolution" value="4.80 A"/>
    <property type="chains" value="b=2-102"/>
</dbReference>
<dbReference type="PDB" id="7SYK">
    <property type="method" value="EM"/>
    <property type="resolution" value="4.20 A"/>
    <property type="chains" value="b=2-102"/>
</dbReference>
<dbReference type="PDB" id="7SYL">
    <property type="method" value="EM"/>
    <property type="resolution" value="4.50 A"/>
    <property type="chains" value="b=2-102"/>
</dbReference>
<dbReference type="PDB" id="7SYM">
    <property type="method" value="EM"/>
    <property type="resolution" value="4.80 A"/>
    <property type="chains" value="b=2-102"/>
</dbReference>
<dbReference type="PDB" id="7SYN">
    <property type="method" value="EM"/>
    <property type="resolution" value="4.00 A"/>
    <property type="chains" value="b=2-102"/>
</dbReference>
<dbReference type="PDB" id="7SYO">
    <property type="method" value="EM"/>
    <property type="resolution" value="4.60 A"/>
    <property type="chains" value="b=2-102"/>
</dbReference>
<dbReference type="PDB" id="7SYP">
    <property type="method" value="EM"/>
    <property type="resolution" value="4.00 A"/>
    <property type="chains" value="b=2-102"/>
</dbReference>
<dbReference type="PDB" id="7SYQ">
    <property type="method" value="EM"/>
    <property type="resolution" value="3.80 A"/>
    <property type="chains" value="b=2-102"/>
</dbReference>
<dbReference type="PDB" id="7SYR">
    <property type="method" value="EM"/>
    <property type="resolution" value="3.60 A"/>
    <property type="chains" value="b=2-102"/>
</dbReference>
<dbReference type="PDB" id="7SYS">
    <property type="method" value="EM"/>
    <property type="resolution" value="3.50 A"/>
    <property type="chains" value="b=2-102"/>
</dbReference>
<dbReference type="PDB" id="7SYT">
    <property type="method" value="EM"/>
    <property type="resolution" value="4.40 A"/>
    <property type="chains" value="b=2-102"/>
</dbReference>
<dbReference type="PDB" id="7SYU">
    <property type="method" value="EM"/>
    <property type="resolution" value="4.60 A"/>
    <property type="chains" value="b=2-102"/>
</dbReference>
<dbReference type="PDB" id="7SYV">
    <property type="method" value="EM"/>
    <property type="resolution" value="3.90 A"/>
    <property type="chains" value="b=2-102"/>
</dbReference>
<dbReference type="PDB" id="7SYW">
    <property type="method" value="EM"/>
    <property type="resolution" value="3.70 A"/>
    <property type="chains" value="b=2-102"/>
</dbReference>
<dbReference type="PDB" id="7SYX">
    <property type="method" value="EM"/>
    <property type="resolution" value="3.70 A"/>
    <property type="chains" value="b=2-102"/>
</dbReference>
<dbReference type="PDB" id="7TOQ">
    <property type="method" value="EM"/>
    <property type="resolution" value="3.10 A"/>
    <property type="chains" value="AS26=2-102"/>
</dbReference>
<dbReference type="PDB" id="7TOR">
    <property type="method" value="EM"/>
    <property type="resolution" value="2.90 A"/>
    <property type="chains" value="AS26=2-102"/>
</dbReference>
<dbReference type="PDB" id="7UCJ">
    <property type="method" value="EM"/>
    <property type="resolution" value="3.10 A"/>
    <property type="chains" value="Aa=2-102"/>
</dbReference>
<dbReference type="PDB" id="7UCK">
    <property type="method" value="EM"/>
    <property type="resolution" value="2.80 A"/>
    <property type="chains" value="Aa=2-102"/>
</dbReference>
<dbReference type="PDB" id="8P03">
    <property type="method" value="EM"/>
    <property type="resolution" value="3.04 A"/>
    <property type="chains" value="b=1-115"/>
</dbReference>
<dbReference type="PDB" id="8P09">
    <property type="method" value="EM"/>
    <property type="resolution" value="3.30 A"/>
    <property type="chains" value="b=1-115"/>
</dbReference>
<dbReference type="PDB" id="8SCB">
    <property type="method" value="EM"/>
    <property type="resolution" value="2.50 A"/>
    <property type="chains" value="aa=1-115"/>
</dbReference>
<dbReference type="PDB" id="8VFT">
    <property type="method" value="EM"/>
    <property type="resolution" value="3.30 A"/>
    <property type="chains" value="aa=1-115"/>
</dbReference>
<dbReference type="PDB" id="9BDL">
    <property type="method" value="EM"/>
    <property type="resolution" value="2.80 A"/>
    <property type="chains" value="AS26=2-102"/>
</dbReference>
<dbReference type="PDB" id="9BDN">
    <property type="method" value="EM"/>
    <property type="resolution" value="3.10 A"/>
    <property type="chains" value="AS26=2-102"/>
</dbReference>
<dbReference type="PDB" id="9BDP">
    <property type="method" value="EM"/>
    <property type="resolution" value="3.70 A"/>
    <property type="chains" value="AS26=2-102"/>
</dbReference>
<dbReference type="PDB" id="9C8K">
    <property type="method" value="EM"/>
    <property type="resolution" value="3.10 A"/>
    <property type="chains" value="a=1-115"/>
</dbReference>
<dbReference type="PDBsum" id="4D5L"/>
<dbReference type="PDBsum" id="4D61"/>
<dbReference type="PDBsum" id="4KZX"/>
<dbReference type="PDBsum" id="4KZY"/>
<dbReference type="PDBsum" id="4KZZ"/>
<dbReference type="PDBsum" id="5K0Y"/>
<dbReference type="PDBsum" id="6D90"/>
<dbReference type="PDBsum" id="6P4G"/>
<dbReference type="PDBsum" id="6P4H"/>
<dbReference type="PDBsum" id="6P5I"/>
<dbReference type="PDBsum" id="6P5J"/>
<dbReference type="PDBsum" id="6P5K"/>
<dbReference type="PDBsum" id="6P5N"/>
<dbReference type="PDBsum" id="6W2S"/>
<dbReference type="PDBsum" id="6W2T"/>
<dbReference type="PDBsum" id="6YAL"/>
<dbReference type="PDBsum" id="6YAM"/>
<dbReference type="PDBsum" id="6YAN"/>
<dbReference type="PDBsum" id="7JQB"/>
<dbReference type="PDBsum" id="7JQC"/>
<dbReference type="PDBsum" id="7MDZ"/>
<dbReference type="PDBsum" id="7SYG"/>
<dbReference type="PDBsum" id="7SYH"/>
<dbReference type="PDBsum" id="7SYI"/>
<dbReference type="PDBsum" id="7SYJ"/>
<dbReference type="PDBsum" id="7SYK"/>
<dbReference type="PDBsum" id="7SYL"/>
<dbReference type="PDBsum" id="7SYM"/>
<dbReference type="PDBsum" id="7SYN"/>
<dbReference type="PDBsum" id="7SYO"/>
<dbReference type="PDBsum" id="7SYP"/>
<dbReference type="PDBsum" id="7SYQ"/>
<dbReference type="PDBsum" id="7SYR"/>
<dbReference type="PDBsum" id="7SYS"/>
<dbReference type="PDBsum" id="7SYT"/>
<dbReference type="PDBsum" id="7SYU"/>
<dbReference type="PDBsum" id="7SYV"/>
<dbReference type="PDBsum" id="7SYW"/>
<dbReference type="PDBsum" id="7SYX"/>
<dbReference type="PDBsum" id="7TOQ"/>
<dbReference type="PDBsum" id="7TOR"/>
<dbReference type="PDBsum" id="7UCJ"/>
<dbReference type="PDBsum" id="7UCK"/>
<dbReference type="PDBsum" id="8P03"/>
<dbReference type="PDBsum" id="8P09"/>
<dbReference type="PDBsum" id="8SCB"/>
<dbReference type="PDBsum" id="8VFT"/>
<dbReference type="PDBsum" id="9BDL"/>
<dbReference type="PDBsum" id="9BDN"/>
<dbReference type="PDBsum" id="9BDP"/>
<dbReference type="PDBsum" id="9C8K"/>
<dbReference type="EMDB" id="EMD-0099"/>
<dbReference type="EMDB" id="EMD-0100"/>
<dbReference type="EMDB" id="EMD-0192"/>
<dbReference type="EMDB" id="EMD-0194"/>
<dbReference type="EMDB" id="EMD-0195"/>
<dbReference type="EMDB" id="EMD-0197"/>
<dbReference type="EMDB" id="EMD-10181"/>
<dbReference type="EMDB" id="EMD-10760"/>
<dbReference type="EMDB" id="EMD-10761"/>
<dbReference type="EMDB" id="EMD-10762"/>
<dbReference type="EMDB" id="EMD-17329"/>
<dbReference type="EMDB" id="EMD-17330"/>
<dbReference type="EMDB" id="EMD-20248"/>
<dbReference type="EMDB" id="EMD-20249"/>
<dbReference type="EMDB" id="EMD-20255"/>
<dbReference type="EMDB" id="EMD-20256"/>
<dbReference type="EMDB" id="EMD-20257"/>
<dbReference type="EMDB" id="EMD-20258"/>
<dbReference type="EMDB" id="EMD-21529"/>
<dbReference type="EMDB" id="EMD-21530"/>
<dbReference type="EMDB" id="EMD-22432"/>
<dbReference type="EMDB" id="EMD-22433"/>
<dbReference type="EMDB" id="EMD-23785"/>
<dbReference type="EMDB" id="EMD-25527"/>
<dbReference type="EMDB" id="EMD-25529"/>
<dbReference type="EMDB" id="EMD-25530"/>
<dbReference type="EMDB" id="EMD-25531"/>
<dbReference type="EMDB" id="EMD-25532"/>
<dbReference type="EMDB" id="EMD-25533"/>
<dbReference type="EMDB" id="EMD-25534"/>
<dbReference type="EMDB" id="EMD-25535"/>
<dbReference type="EMDB" id="EMD-25536"/>
<dbReference type="EMDB" id="EMD-25537"/>
<dbReference type="EMDB" id="EMD-25538"/>
<dbReference type="EMDB" id="EMD-25539"/>
<dbReference type="EMDB" id="EMD-25540"/>
<dbReference type="EMDB" id="EMD-25541"/>
<dbReference type="EMDB" id="EMD-25542"/>
<dbReference type="EMDB" id="EMD-25543"/>
<dbReference type="EMDB" id="EMD-25544"/>
<dbReference type="EMDB" id="EMD-26035"/>
<dbReference type="EMDB" id="EMD-26036"/>
<dbReference type="EMDB" id="EMD-26444"/>
<dbReference type="EMDB" id="EMD-26445"/>
<dbReference type="EMDB" id="EMD-40344"/>
<dbReference type="EMDB" id="EMD-4130"/>
<dbReference type="EMDB" id="EMD-4131"/>
<dbReference type="EMDB" id="EMD-4132"/>
<dbReference type="EMDB" id="EMD-4133"/>
<dbReference type="EMDB" id="EMD-4134"/>
<dbReference type="EMDB" id="EMD-4135"/>
<dbReference type="EMDB" id="EMD-4136"/>
<dbReference type="EMDB" id="EMD-4137"/>
<dbReference type="EMDB" id="EMD-43189"/>
<dbReference type="EMDB" id="EMD-44461"/>
<dbReference type="EMDB" id="EMD-44463"/>
<dbReference type="EMDB" id="EMD-44464"/>
<dbReference type="EMDB" id="EMD-45307"/>
<dbReference type="EMDB" id="EMD-4729"/>
<dbReference type="EMDB" id="EMD-4737"/>
<dbReference type="EMDB" id="EMD-4745"/>
<dbReference type="EMDB" id="EMD-7834"/>
<dbReference type="EMDB" id="EMD-7836"/>
<dbReference type="EMDB" id="EMD-8190"/>
<dbReference type="SMR" id="G1TFE8"/>
<dbReference type="FunCoup" id="G1TFE8">
    <property type="interactions" value="796"/>
</dbReference>
<dbReference type="IntAct" id="G1TFE8">
    <property type="interactions" value="1"/>
</dbReference>
<dbReference type="STRING" id="9986.ENSOCUP00000015638"/>
<dbReference type="PaxDb" id="9986-ENSOCUP00000015638"/>
<dbReference type="Ensembl" id="ENSOCUT00000013552.2">
    <property type="protein sequence ID" value="ENSOCUP00000015638.1"/>
    <property type="gene ID" value="ENSOCUG00000028015.1"/>
</dbReference>
<dbReference type="KEGG" id="ocu:100346996"/>
<dbReference type="eggNOG" id="KOG1768">
    <property type="taxonomic scope" value="Eukaryota"/>
</dbReference>
<dbReference type="GeneTree" id="ENSGT00390000002517"/>
<dbReference type="HOGENOM" id="CLU_129451_0_1_1"/>
<dbReference type="InParanoid" id="G1TFE8"/>
<dbReference type="OMA" id="KCYCVSC"/>
<dbReference type="OrthoDB" id="10262653at2759"/>
<dbReference type="TreeFam" id="TF300234"/>
<dbReference type="EvolutionaryTrace" id="G1TFE8"/>
<dbReference type="Proteomes" id="UP000001811">
    <property type="component" value="Chromosome 16"/>
</dbReference>
<dbReference type="Bgee" id="ENSOCUG00000028015">
    <property type="expression patterns" value="Expressed in uterus and 17 other cell types or tissues"/>
</dbReference>
<dbReference type="GO" id="GO:0022626">
    <property type="term" value="C:cytosolic ribosome"/>
    <property type="evidence" value="ECO:0000314"/>
    <property type="project" value="UniProtKB"/>
</dbReference>
<dbReference type="GO" id="GO:0022627">
    <property type="term" value="C:cytosolic small ribosomal subunit"/>
    <property type="evidence" value="ECO:0007669"/>
    <property type="project" value="TreeGrafter"/>
</dbReference>
<dbReference type="GO" id="GO:0005791">
    <property type="term" value="C:rough endoplasmic reticulum"/>
    <property type="evidence" value="ECO:0007669"/>
    <property type="project" value="UniProtKB-SubCell"/>
</dbReference>
<dbReference type="GO" id="GO:0003729">
    <property type="term" value="F:mRNA binding"/>
    <property type="evidence" value="ECO:0007669"/>
    <property type="project" value="TreeGrafter"/>
</dbReference>
<dbReference type="GO" id="GO:0003735">
    <property type="term" value="F:structural constituent of ribosome"/>
    <property type="evidence" value="ECO:0000314"/>
    <property type="project" value="UniProtKB"/>
</dbReference>
<dbReference type="GO" id="GO:0006412">
    <property type="term" value="P:translation"/>
    <property type="evidence" value="ECO:0007669"/>
    <property type="project" value="InterPro"/>
</dbReference>
<dbReference type="FunFam" id="3.30.1740.20:FF:000001">
    <property type="entry name" value="40S ribosomal protein S26"/>
    <property type="match status" value="1"/>
</dbReference>
<dbReference type="Gene3D" id="3.30.1740.20">
    <property type="entry name" value="Ribosomal protein S26e"/>
    <property type="match status" value="1"/>
</dbReference>
<dbReference type="InterPro" id="IPR000892">
    <property type="entry name" value="Ribosomal_eS26"/>
</dbReference>
<dbReference type="InterPro" id="IPR047864">
    <property type="entry name" value="Ribosomal_eS26_CS"/>
</dbReference>
<dbReference type="InterPro" id="IPR038551">
    <property type="entry name" value="Ribosomal_eS26_sf"/>
</dbReference>
<dbReference type="PANTHER" id="PTHR12538">
    <property type="entry name" value="40S RIBOSOMAL PROTEIN S26"/>
    <property type="match status" value="1"/>
</dbReference>
<dbReference type="PANTHER" id="PTHR12538:SF7">
    <property type="entry name" value="SMALL RIBOSOMAL SUBUNIT PROTEIN ES26-RELATED"/>
    <property type="match status" value="1"/>
</dbReference>
<dbReference type="Pfam" id="PF01283">
    <property type="entry name" value="Ribosomal_S26e"/>
    <property type="match status" value="1"/>
</dbReference>
<dbReference type="PROSITE" id="PS00733">
    <property type="entry name" value="RIBOSOMAL_S26E"/>
    <property type="match status" value="1"/>
</dbReference>
<feature type="initiator methionine" description="Removed" evidence="2">
    <location>
        <position position="1"/>
    </location>
</feature>
<feature type="chain" id="PRO_0000460076" description="Small ribosomal subunit protein eS26">
    <location>
        <begin position="2"/>
        <end position="115"/>
    </location>
</feature>
<feature type="region of interest" description="Disordered" evidence="4">
    <location>
        <begin position="85"/>
        <end position="115"/>
    </location>
</feature>
<feature type="compositionally biased region" description="Basic and acidic residues" evidence="4">
    <location>
        <begin position="87"/>
        <end position="97"/>
    </location>
</feature>
<feature type="compositionally biased region" description="Pro residues" evidence="4">
    <location>
        <begin position="98"/>
        <end position="115"/>
    </location>
</feature>
<feature type="binding site" evidence="7">
    <location>
        <position position="23"/>
    </location>
    <ligand>
        <name>Zn(2+)</name>
        <dbReference type="ChEBI" id="CHEBI:29105"/>
    </ligand>
</feature>
<feature type="binding site" evidence="7">
    <location>
        <position position="26"/>
    </location>
    <ligand>
        <name>Zn(2+)</name>
        <dbReference type="ChEBI" id="CHEBI:29105"/>
    </ligand>
</feature>
<feature type="binding site" evidence="7">
    <location>
        <position position="74"/>
    </location>
    <ligand>
        <name>Zn(2+)</name>
        <dbReference type="ChEBI" id="CHEBI:29105"/>
    </ligand>
</feature>
<feature type="binding site" evidence="7">
    <location>
        <position position="77"/>
    </location>
    <ligand>
        <name>Zn(2+)</name>
        <dbReference type="ChEBI" id="CHEBI:29105"/>
    </ligand>
</feature>
<feature type="modified residue" description="Phosphoserine" evidence="2">
    <location>
        <position position="54"/>
    </location>
</feature>
<feature type="strand" evidence="27">
    <location>
        <begin position="6"/>
        <end position="10"/>
    </location>
</feature>
<feature type="strand" evidence="29">
    <location>
        <begin position="20"/>
        <end position="22"/>
    </location>
</feature>
<feature type="strand" evidence="29">
    <location>
        <begin position="24"/>
        <end position="26"/>
    </location>
</feature>
<feature type="strand" evidence="29">
    <location>
        <begin position="29"/>
        <end position="31"/>
    </location>
</feature>
<feature type="turn" evidence="29">
    <location>
        <begin position="32"/>
        <end position="34"/>
    </location>
</feature>
<feature type="strand" evidence="29">
    <location>
        <begin position="35"/>
        <end position="45"/>
    </location>
</feature>
<feature type="turn" evidence="28">
    <location>
        <begin position="46"/>
        <end position="48"/>
    </location>
</feature>
<feature type="helix" evidence="29">
    <location>
        <begin position="49"/>
        <end position="55"/>
    </location>
</feature>
<feature type="strand" evidence="29">
    <location>
        <begin position="58"/>
        <end position="61"/>
    </location>
</feature>
<feature type="strand" evidence="29">
    <location>
        <begin position="66"/>
        <end position="73"/>
    </location>
</feature>
<feature type="helix" evidence="29">
    <location>
        <begin position="75"/>
        <end position="80"/>
    </location>
</feature>
<feature type="turn" evidence="30">
    <location>
        <begin position="89"/>
        <end position="93"/>
    </location>
</feature>
<sequence length="115" mass="12931">MTKKRRNNGRAKKGRGHVQPIRCTNCACCVPKDKAIKKFVIRNIVEAAAVRDISEVSVFDAYVLPKLYVKLHYCVSCAIHSKVVRNRSREARKDRTPPPRFRPAGAAPPPPPKPM</sequence>
<comment type="function">
    <text evidence="5 6 7">Component of the small ribosomal subunit (PubMed:23873042, PubMed:25601755, PubMed:26245381). The ribosome is a large ribonucleoprotein complex responsible for the synthesis of proteins in the cell (PubMed:23873042, PubMed:25601755, PubMed:26245381).</text>
</comment>
<comment type="subunit">
    <text evidence="5 6 7 8 9 10 11 12">Component of the 40S small ribosomal subunit.</text>
</comment>
<comment type="subcellular location">
    <subcellularLocation>
        <location evidence="2">Cytoplasm</location>
        <location evidence="2">Cytosol</location>
    </subcellularLocation>
    <subcellularLocation>
        <location evidence="5 6 7 8 9 10 11 12">Cytoplasm</location>
    </subcellularLocation>
    <subcellularLocation>
        <location evidence="1">Rough endoplasmic reticulum</location>
    </subcellularLocation>
    <text evidence="1 2">Detected on cytosolic polysomes (By similarity). Detected in ribosomes that are associated with the rough endoplasmic reticulum (By similarity).</text>
</comment>
<comment type="similarity">
    <text evidence="13">Belongs to the eukaryotic ribosomal protein eS26 family.</text>
</comment>
<name>RS26_RABIT</name>
<accession>G1TFE8</accession>
<reference key="1">
    <citation type="journal article" date="2011" name="Nature">
        <title>A high-resolution map of human evolutionary constraint using 29 mammals.</title>
        <authorList>
            <person name="Lindblad-Toh K."/>
            <person name="Garber M."/>
            <person name="Zuk O."/>
            <person name="Lin M.F."/>
            <person name="Parker B.J."/>
            <person name="Washietl S."/>
            <person name="Kheradpour P."/>
            <person name="Ernst J."/>
            <person name="Jordan G."/>
            <person name="Mauceli E."/>
            <person name="Ward L.D."/>
            <person name="Lowe C.B."/>
            <person name="Holloway A.K."/>
            <person name="Clamp M."/>
            <person name="Gnerre S."/>
            <person name="Alfoldi J."/>
            <person name="Beal K."/>
            <person name="Chang J."/>
            <person name="Clawson H."/>
            <person name="Cuff J."/>
            <person name="Di Palma F."/>
            <person name="Fitzgerald S."/>
            <person name="Flicek P."/>
            <person name="Guttman M."/>
            <person name="Hubisz M.J."/>
            <person name="Jaffe D.B."/>
            <person name="Jungreis I."/>
            <person name="Kent W.J."/>
            <person name="Kostka D."/>
            <person name="Lara M."/>
            <person name="Martins A.L."/>
            <person name="Massingham T."/>
            <person name="Moltke I."/>
            <person name="Raney B.J."/>
            <person name="Rasmussen M.D."/>
            <person name="Robinson J."/>
            <person name="Stark A."/>
            <person name="Vilella A.J."/>
            <person name="Wen J."/>
            <person name="Xie X."/>
            <person name="Zody M.C."/>
            <person name="Baldwin J."/>
            <person name="Bloom T."/>
            <person name="Chin C.W."/>
            <person name="Heiman D."/>
            <person name="Nicol R."/>
            <person name="Nusbaum C."/>
            <person name="Young S."/>
            <person name="Wilkinson J."/>
            <person name="Worley K.C."/>
            <person name="Kovar C.L."/>
            <person name="Muzny D.M."/>
            <person name="Gibbs R.A."/>
            <person name="Cree A."/>
            <person name="Dihn H.H."/>
            <person name="Fowler G."/>
            <person name="Jhangiani S."/>
            <person name="Joshi V."/>
            <person name="Lee S."/>
            <person name="Lewis L.R."/>
            <person name="Nazareth L.V."/>
            <person name="Okwuonu G."/>
            <person name="Santibanez J."/>
            <person name="Warren W.C."/>
            <person name="Mardis E.R."/>
            <person name="Weinstock G.M."/>
            <person name="Wilson R.K."/>
            <person name="Delehaunty K."/>
            <person name="Dooling D."/>
            <person name="Fronik C."/>
            <person name="Fulton L."/>
            <person name="Fulton B."/>
            <person name="Graves T."/>
            <person name="Minx P."/>
            <person name="Sodergren E."/>
            <person name="Birney E."/>
            <person name="Margulies E.H."/>
            <person name="Herrero J."/>
            <person name="Green E.D."/>
            <person name="Haussler D."/>
            <person name="Siepel A."/>
            <person name="Goldman N."/>
            <person name="Pollard K.S."/>
            <person name="Pedersen J.S."/>
            <person name="Lander E.S."/>
            <person name="Kellis M."/>
        </authorList>
    </citation>
    <scope>NUCLEOTIDE SEQUENCE [LARGE SCALE GENOMIC DNA]</scope>
    <source>
        <strain>Thorbecke</strain>
    </source>
</reference>
<reference evidence="16 17" key="2">
    <citation type="journal article" date="2013" name="Nature">
        <title>The initiation of mammalian protein synthesis and mRNA scanning mechanism.</title>
        <authorList>
            <person name="Lomakin I.B."/>
            <person name="Steitz T.A."/>
        </authorList>
    </citation>
    <scope>X-RAY CRYSTALLOGRAPHY (7.01 ANGSTROMS) OF 40S RIBOSOME</scope>
    <scope>FUNCTION</scope>
    <scope>SUBUNIT</scope>
    <scope>SUBCELLULAR LOCATION</scope>
</reference>
<reference key="3">
    <citation type="journal article" date="2015" name="Nature">
        <title>Structural basis for stop codon recognition in eukaryotes.</title>
        <authorList>
            <person name="Brown A."/>
            <person name="Shao S."/>
            <person name="Murray J."/>
            <person name="Hegde R.S."/>
            <person name="Ramakrishnan V."/>
        </authorList>
    </citation>
    <scope>STRUCTURE BY ELECTRON MICROSCOPY (3.45 ANGSTROMS) OF RIBOSOME</scope>
    <scope>FUNCTION</scope>
    <scope>SUBCELLULAR LOCATION</scope>
    <scope>SUBUNIT</scope>
</reference>
<reference evidence="14 15" key="4">
    <citation type="journal article" date="2015" name="Mol. Cell">
        <title>Cryo-EM of ribosomal 80S complexes with termination factors reveals the translocated cricket paralysis virus IRES.</title>
        <authorList>
            <person name="Muhs M."/>
            <person name="Hilal T."/>
            <person name="Mielke T."/>
            <person name="Skabkin M.A."/>
            <person name="Sanbonmatsu K.Y."/>
            <person name="Pestova T.V."/>
            <person name="Spahn C.M."/>
        </authorList>
    </citation>
    <scope>STRUCTURE BY ELECTRON MICROSCOPY (9.00 ANGSTROMS) OF RIBOSOME</scope>
    <scope>FUNCTION</scope>
    <scope>SUBUNIT</scope>
    <scope>SUBCELLULAR LOCATION</scope>
</reference>
<reference evidence="18" key="5">
    <citation type="journal article" date="2018" name="Elife">
        <title>Dual tRNA mimicry in the Cricket paralysis virus IRES uncovers an unexpected similarity with the Hepatitis C Virus IRES.</title>
        <authorList>
            <person name="Pisareva V.P."/>
            <person name="Pisarev A.V."/>
            <person name="Fernandez I.S."/>
        </authorList>
    </citation>
    <scope>STRUCTURE BY ELECTRON MICROSCOPY (3.20 ANGSTROMS) OF RIBOSOME</scope>
    <scope>SUBCELLULAR LOCATION</scope>
    <scope>SUBUNIT</scope>
</reference>
<reference evidence="19 20" key="6">
    <citation type="journal article" date="2019" name="EMBO J.">
        <title>The Israeli acute paralysis virus IRES captures host ribosomes by mimicking a ribosomal state with hybrid tRNAs.</title>
        <authorList>
            <person name="Acosta-Reyes F."/>
            <person name="Neupane R."/>
            <person name="Frank J."/>
            <person name="Fernandez I.S."/>
        </authorList>
    </citation>
    <scope>STRUCTURE BY ELECTRON MICROSCOPY (3.10 ANGSTROMS) OF RIBOSOME</scope>
    <scope>SUBCELLULAR LOCATION</scope>
    <scope>SUBUNIT</scope>
</reference>
<reference evidence="21 22" key="7">
    <citation type="journal article" date="2020" name="Elife">
        <title>A complex IRES at the 5'-UTR of a viral mRNA assembles a functional 48S complex via an uAUG intermediate.</title>
        <authorList>
            <person name="Neupane R."/>
            <person name="Pisareva V.P."/>
            <person name="Rodriguez C.F."/>
            <person name="Pisarev A.V."/>
            <person name="Fernandez I.S."/>
        </authorList>
    </citation>
    <scope>STRUCTURE BY ELECTRON MICROSCOPY (3.00 ANGSTROMS) OF RIBOSOME</scope>
    <scope>SUBCELLULAR LOCATION</scope>
    <scope>SUBUNIT</scope>
</reference>
<reference evidence="23 24" key="8">
    <citation type="journal article" date="2022" name="EMBO J.">
        <title>Molecular architecture of 40S translation initiation complexes on the hepatitis C virus IRES.</title>
        <authorList>
            <person name="Brown Z.P."/>
            <person name="Abaeva I.S."/>
            <person name="De S."/>
            <person name="Hellen C.U.T."/>
            <person name="Pestova T.V."/>
            <person name="Frank J."/>
        </authorList>
    </citation>
    <scope>STRUCTURE BY ELECTRON MICROSCOPY (3.50 ANGSTROMS) OF RIBOSOME</scope>
    <scope>SUBCELLULAR LOCATION</scope>
    <scope>SUBUNIT</scope>
</reference>
<reference evidence="25 26" key="9">
    <citation type="journal article" date="2022" name="Mol. Cell">
        <title>Direct epitranscriptomic regulation of mammalian translation initiation through N4-acetylcytidine.</title>
        <authorList>
            <person name="Arango D."/>
            <person name="Sturgill D."/>
            <person name="Yang R."/>
            <person name="Kanai T."/>
            <person name="Bauer P."/>
            <person name="Roy J."/>
            <person name="Wang Z."/>
            <person name="Hosogane M."/>
            <person name="Schiffers S."/>
            <person name="Oberdoerffer S."/>
        </authorList>
    </citation>
    <scope>STRUCTURE BY ELECTRON MICROSCOPY (2.80 ANGSTROMS) OF 2-102 OF RIBOSOME</scope>
    <scope>SUBCELLULAR LOCATION</scope>
    <scope>SUBUNIT</scope>
</reference>
<keyword id="KW-0002">3D-structure</keyword>
<keyword id="KW-0963">Cytoplasm</keyword>
<keyword id="KW-0256">Endoplasmic reticulum</keyword>
<keyword id="KW-0597">Phosphoprotein</keyword>
<keyword id="KW-1185">Reference proteome</keyword>
<keyword id="KW-0687">Ribonucleoprotein</keyword>
<keyword id="KW-0689">Ribosomal protein</keyword>
<keyword id="KW-0862">Zinc</keyword>
<proteinExistence type="evidence at protein level"/>
<gene>
    <name type="primary">RPS26</name>
</gene>
<organism>
    <name type="scientific">Oryctolagus cuniculus</name>
    <name type="common">Rabbit</name>
    <dbReference type="NCBI Taxonomy" id="9986"/>
    <lineage>
        <taxon>Eukaryota</taxon>
        <taxon>Metazoa</taxon>
        <taxon>Chordata</taxon>
        <taxon>Craniata</taxon>
        <taxon>Vertebrata</taxon>
        <taxon>Euteleostomi</taxon>
        <taxon>Mammalia</taxon>
        <taxon>Eutheria</taxon>
        <taxon>Euarchontoglires</taxon>
        <taxon>Glires</taxon>
        <taxon>Lagomorpha</taxon>
        <taxon>Leporidae</taxon>
        <taxon>Oryctolagus</taxon>
    </lineage>
</organism>
<protein>
    <recommendedName>
        <fullName>Small ribosomal subunit protein eS26</fullName>
    </recommendedName>
    <alternativeName>
        <fullName evidence="3">40S ribosomal protein S26</fullName>
    </alternativeName>
</protein>